<name>RS15_PARD8</name>
<feature type="chain" id="PRO_1000054832" description="Small ribosomal subunit protein uS15">
    <location>
        <begin position="1"/>
        <end position="89"/>
    </location>
</feature>
<reference key="1">
    <citation type="journal article" date="2007" name="PLoS Biol.">
        <title>Evolution of symbiotic bacteria in the distal human intestine.</title>
        <authorList>
            <person name="Xu J."/>
            <person name="Mahowald M.A."/>
            <person name="Ley R.E."/>
            <person name="Lozupone C.A."/>
            <person name="Hamady M."/>
            <person name="Martens E.C."/>
            <person name="Henrissat B."/>
            <person name="Coutinho P.M."/>
            <person name="Minx P."/>
            <person name="Latreille P."/>
            <person name="Cordum H."/>
            <person name="Van Brunt A."/>
            <person name="Kim K."/>
            <person name="Fulton R.S."/>
            <person name="Fulton L.A."/>
            <person name="Clifton S.W."/>
            <person name="Wilson R.K."/>
            <person name="Knight R.D."/>
            <person name="Gordon J.I."/>
        </authorList>
    </citation>
    <scope>NUCLEOTIDE SEQUENCE [LARGE SCALE GENOMIC DNA]</scope>
    <source>
        <strain>ATCC 8503 / DSM 20701 / CIP 104284 / JCM 5825 / NCTC 11152</strain>
    </source>
</reference>
<gene>
    <name evidence="1" type="primary">rpsO</name>
    <name type="ordered locus">BDI_2770</name>
</gene>
<organism>
    <name type="scientific">Parabacteroides distasonis (strain ATCC 8503 / DSM 20701 / CIP 104284 / JCM 5825 / NCTC 11152)</name>
    <dbReference type="NCBI Taxonomy" id="435591"/>
    <lineage>
        <taxon>Bacteria</taxon>
        <taxon>Pseudomonadati</taxon>
        <taxon>Bacteroidota</taxon>
        <taxon>Bacteroidia</taxon>
        <taxon>Bacteroidales</taxon>
        <taxon>Tannerellaceae</taxon>
        <taxon>Parabacteroides</taxon>
    </lineage>
</organism>
<comment type="function">
    <text evidence="1">One of the primary rRNA binding proteins, it binds directly to 16S rRNA where it helps nucleate assembly of the platform of the 30S subunit by binding and bridging several RNA helices of the 16S rRNA.</text>
</comment>
<comment type="function">
    <text evidence="1">Forms an intersubunit bridge (bridge B4) with the 23S rRNA of the 50S subunit in the ribosome.</text>
</comment>
<comment type="subunit">
    <text evidence="1">Part of the 30S ribosomal subunit. Forms a bridge to the 50S subunit in the 70S ribosome, contacting the 23S rRNA.</text>
</comment>
<comment type="similarity">
    <text evidence="1">Belongs to the universal ribosomal protein uS15 family.</text>
</comment>
<sequence>MYLDSAKKQELFEKYGKSATNTGSAESQIALFTFRISHLTEHLKVNHKDYATERSLKMLVGKRRRLLDYLIKTDIERYRAIIKELGIRK</sequence>
<keyword id="KW-1185">Reference proteome</keyword>
<keyword id="KW-0687">Ribonucleoprotein</keyword>
<keyword id="KW-0689">Ribosomal protein</keyword>
<keyword id="KW-0694">RNA-binding</keyword>
<keyword id="KW-0699">rRNA-binding</keyword>
<proteinExistence type="inferred from homology"/>
<evidence type="ECO:0000255" key="1">
    <source>
        <dbReference type="HAMAP-Rule" id="MF_01343"/>
    </source>
</evidence>
<evidence type="ECO:0000305" key="2"/>
<dbReference type="EMBL" id="CP000140">
    <property type="protein sequence ID" value="ABR44483.1"/>
    <property type="molecule type" value="Genomic_DNA"/>
</dbReference>
<dbReference type="RefSeq" id="WP_005860800.1">
    <property type="nucleotide sequence ID" value="NZ_LR215978.1"/>
</dbReference>
<dbReference type="SMR" id="A6LFL9"/>
<dbReference type="STRING" id="435591.BDI_2770"/>
<dbReference type="PaxDb" id="435591-BDI_2770"/>
<dbReference type="KEGG" id="pdi:BDI_2770"/>
<dbReference type="eggNOG" id="COG0184">
    <property type="taxonomic scope" value="Bacteria"/>
</dbReference>
<dbReference type="HOGENOM" id="CLU_148518_0_1_10"/>
<dbReference type="BioCyc" id="PDIS435591:G1G5A-2845-MONOMER"/>
<dbReference type="Proteomes" id="UP000000566">
    <property type="component" value="Chromosome"/>
</dbReference>
<dbReference type="GO" id="GO:0022627">
    <property type="term" value="C:cytosolic small ribosomal subunit"/>
    <property type="evidence" value="ECO:0007669"/>
    <property type="project" value="TreeGrafter"/>
</dbReference>
<dbReference type="GO" id="GO:0019843">
    <property type="term" value="F:rRNA binding"/>
    <property type="evidence" value="ECO:0007669"/>
    <property type="project" value="UniProtKB-UniRule"/>
</dbReference>
<dbReference type="GO" id="GO:0003735">
    <property type="term" value="F:structural constituent of ribosome"/>
    <property type="evidence" value="ECO:0007669"/>
    <property type="project" value="InterPro"/>
</dbReference>
<dbReference type="GO" id="GO:0006412">
    <property type="term" value="P:translation"/>
    <property type="evidence" value="ECO:0007669"/>
    <property type="project" value="UniProtKB-UniRule"/>
</dbReference>
<dbReference type="CDD" id="cd00353">
    <property type="entry name" value="Ribosomal_S15p_S13e"/>
    <property type="match status" value="1"/>
</dbReference>
<dbReference type="FunFam" id="1.10.287.10:FF:000002">
    <property type="entry name" value="30S ribosomal protein S15"/>
    <property type="match status" value="1"/>
</dbReference>
<dbReference type="Gene3D" id="6.10.250.3130">
    <property type="match status" value="1"/>
</dbReference>
<dbReference type="Gene3D" id="1.10.287.10">
    <property type="entry name" value="S15/NS1, RNA-binding"/>
    <property type="match status" value="1"/>
</dbReference>
<dbReference type="HAMAP" id="MF_01343_B">
    <property type="entry name" value="Ribosomal_uS15_B"/>
    <property type="match status" value="1"/>
</dbReference>
<dbReference type="InterPro" id="IPR000589">
    <property type="entry name" value="Ribosomal_uS15"/>
</dbReference>
<dbReference type="InterPro" id="IPR005290">
    <property type="entry name" value="Ribosomal_uS15_bac-type"/>
</dbReference>
<dbReference type="InterPro" id="IPR009068">
    <property type="entry name" value="uS15_NS1_RNA-bd_sf"/>
</dbReference>
<dbReference type="NCBIfam" id="TIGR00952">
    <property type="entry name" value="S15_bact"/>
    <property type="match status" value="1"/>
</dbReference>
<dbReference type="PANTHER" id="PTHR23321">
    <property type="entry name" value="RIBOSOMAL PROTEIN S15, BACTERIAL AND ORGANELLAR"/>
    <property type="match status" value="1"/>
</dbReference>
<dbReference type="PANTHER" id="PTHR23321:SF26">
    <property type="entry name" value="SMALL RIBOSOMAL SUBUNIT PROTEIN US15M"/>
    <property type="match status" value="1"/>
</dbReference>
<dbReference type="Pfam" id="PF00312">
    <property type="entry name" value="Ribosomal_S15"/>
    <property type="match status" value="1"/>
</dbReference>
<dbReference type="SMART" id="SM01387">
    <property type="entry name" value="Ribosomal_S15"/>
    <property type="match status" value="1"/>
</dbReference>
<dbReference type="SUPFAM" id="SSF47060">
    <property type="entry name" value="S15/NS1 RNA-binding domain"/>
    <property type="match status" value="1"/>
</dbReference>
<dbReference type="PROSITE" id="PS00362">
    <property type="entry name" value="RIBOSOMAL_S15"/>
    <property type="match status" value="1"/>
</dbReference>
<protein>
    <recommendedName>
        <fullName evidence="1">Small ribosomal subunit protein uS15</fullName>
    </recommendedName>
    <alternativeName>
        <fullName evidence="2">30S ribosomal protein S15</fullName>
    </alternativeName>
</protein>
<accession>A6LFL9</accession>